<organism>
    <name type="scientific">Thauera aromatica</name>
    <dbReference type="NCBI Taxonomy" id="59405"/>
    <lineage>
        <taxon>Bacteria</taxon>
        <taxon>Pseudomonadati</taxon>
        <taxon>Pseudomonadota</taxon>
        <taxon>Betaproteobacteria</taxon>
        <taxon>Rhodocyclales</taxon>
        <taxon>Zoogloeaceae</taxon>
        <taxon>Thauera</taxon>
    </lineage>
</organism>
<proteinExistence type="evidence at protein level"/>
<name>HCRA_THAAR</name>
<comment type="function">
    <text evidence="3">Component of a complex that catalyzes the reductive dehydroxylation of 4-hydroxybenzoyl-CoA to benzoyl-CoA. Reaction is not reversible. Is a key enzyme in the anaerobic degradation of phenolic compounds.</text>
</comment>
<comment type="catalytic activity">
    <reaction evidence="3">
        <text>oxidized 2[4Fe-4S]-[ferredoxin] + benzoyl-CoA + H2O = 4-hydroxybenzoyl-CoA + reduced 2[4Fe-4S]-[ferredoxin] + 2 H(+)</text>
        <dbReference type="Rhea" id="RHEA:29603"/>
        <dbReference type="Rhea" id="RHEA-COMP:10002"/>
        <dbReference type="Rhea" id="RHEA-COMP:10004"/>
        <dbReference type="ChEBI" id="CHEBI:15377"/>
        <dbReference type="ChEBI" id="CHEBI:15378"/>
        <dbReference type="ChEBI" id="CHEBI:33722"/>
        <dbReference type="ChEBI" id="CHEBI:33723"/>
        <dbReference type="ChEBI" id="CHEBI:57356"/>
        <dbReference type="ChEBI" id="CHEBI:57369"/>
        <dbReference type="EC" id="1.1.7.1"/>
    </reaction>
</comment>
<comment type="cofactor">
    <cofactor evidence="1 2">
        <name>Mo-molybdopterin cytosine dinucleotide</name>
        <dbReference type="ChEBI" id="CHEBI:71308"/>
    </cofactor>
    <text evidence="1 2">Binds 1 Mo-molybdopterin cytosine dinucleotide (Mo-MCD) cofactor per subunit.</text>
</comment>
<comment type="activity regulation">
    <text evidence="3">Inactivated by low concentrations of cyanide in vitro.</text>
</comment>
<comment type="subunit">
    <text evidence="2 3">Heterohexamer of two alpha, two beta and two gamma subunits.</text>
</comment>
<comment type="PTM">
    <text>The N-terminus is blocked.</text>
</comment>
<comment type="similarity">
    <text evidence="4">Belongs to the xanthine dehydrogenase family.</text>
</comment>
<protein>
    <recommendedName>
        <fullName>4-hydroxybenzoyl-CoA reductase subunit alpha</fullName>
        <shortName>4-HBCR subunit alpha</shortName>
        <ecNumber evidence="3">1.1.7.1</ecNumber>
    </recommendedName>
</protein>
<reference key="1">
    <citation type="journal article" date="1998" name="Eur. J. Biochem.">
        <title>4-hydroxybenzoyl-CoA reductase (dehydroxylating) from the denitrifying bacterium Thauera aromatica -- prosthetic groups, electron donor, and genes of a member of the molybdenum-flavin-iron-sulfur proteins.</title>
        <authorList>
            <person name="Breese K."/>
            <person name="Fuchs G."/>
        </authorList>
    </citation>
    <scope>NUCLEOTIDE SEQUENCE [GENOMIC DNA]</scope>
    <scope>PROTEIN SEQUENCE OF 3-11</scope>
    <scope>FUNCTION</scope>
    <scope>CATALYTIC ACTIVITY</scope>
    <scope>ACTIVITY REGULATION</scope>
    <scope>SUBUNIT</scope>
    <scope>BLOCKAGE OF N-TERMINUS</scope>
    <source>
        <strain>DSM 6984 / CIP 107765 / K172</strain>
    </source>
</reference>
<reference key="2">
    <citation type="journal article" date="2001" name="J. Biol. Chem.">
        <title>Redox centers of 4-hydroxybenzoyl-CoA reductase, a member of the xanthine oxidase family of molybdenum-containing enzymes.</title>
        <authorList>
            <person name="Boll M."/>
            <person name="Fuchs G."/>
            <person name="Meier C."/>
            <person name="Trautwein A."/>
            <person name="El Kasmi A."/>
            <person name="Ragsdale S.W."/>
            <person name="Buchanan G."/>
            <person name="Lowe D.J."/>
        </authorList>
    </citation>
    <scope>COFACTOR</scope>
    <scope>EPR SPECTROSCOPY</scope>
    <scope>MOSSBAUER SPECTROSCOPY</scope>
    <source>
        <strain>DSM 6984 / CIP 107765 / K172</strain>
    </source>
</reference>
<reference key="3">
    <citation type="journal article" date="2004" name="Structure">
        <title>Structure of a xanthine oxidase-related 4-hydroxybenzoyl-CoA reductase with an additional [4Fe-4S] cluster and an inverted electron flow.</title>
        <authorList>
            <person name="Unciuleac M."/>
            <person name="Warkentin E."/>
            <person name="Page C.C."/>
            <person name="Boll M."/>
            <person name="Ermler U."/>
        </authorList>
    </citation>
    <scope>X-RAY CRYSTALLOGRAPHY (1.6 ANGSTROMS) IN COMPLEX WITH MO-MCD AND SUBUNIT BETA AND GAMMA</scope>
    <scope>COFACTOR</scope>
    <scope>SUBUNIT</scope>
</reference>
<dbReference type="EC" id="1.1.7.1" evidence="3"/>
<dbReference type="EMBL" id="AJ001830">
    <property type="protein sequence ID" value="CAA05038.1"/>
    <property type="molecule type" value="Genomic_DNA"/>
</dbReference>
<dbReference type="PDB" id="1RM6">
    <property type="method" value="X-ray"/>
    <property type="resolution" value="1.60 A"/>
    <property type="chains" value="A/D=1-769"/>
</dbReference>
<dbReference type="PDB" id="1SB3">
    <property type="method" value="X-ray"/>
    <property type="resolution" value="2.20 A"/>
    <property type="chains" value="A/D=1-769"/>
</dbReference>
<dbReference type="PDBsum" id="1RM6"/>
<dbReference type="PDBsum" id="1SB3"/>
<dbReference type="SMR" id="O33819"/>
<dbReference type="DIP" id="DIP-48466N"/>
<dbReference type="IntAct" id="O33819">
    <property type="interactions" value="2"/>
</dbReference>
<dbReference type="KEGG" id="ag:CAA05038"/>
<dbReference type="BioCyc" id="MetaCyc:AOHBENREDTHAUERA-MONOMER"/>
<dbReference type="EvolutionaryTrace" id="O33819"/>
<dbReference type="GO" id="GO:0018525">
    <property type="term" value="F:4-hydroxybenzoyl-CoA reductase activity"/>
    <property type="evidence" value="ECO:0007669"/>
    <property type="project" value="UniProtKB-EC"/>
</dbReference>
<dbReference type="GO" id="GO:0005506">
    <property type="term" value="F:iron ion binding"/>
    <property type="evidence" value="ECO:0007669"/>
    <property type="project" value="InterPro"/>
</dbReference>
<dbReference type="Gene3D" id="3.90.1170.50">
    <property type="entry name" value="Aldehyde oxidase/xanthine dehydrogenase, a/b hammerhead"/>
    <property type="match status" value="1"/>
</dbReference>
<dbReference type="Gene3D" id="3.30.365.10">
    <property type="entry name" value="Aldehyde oxidase/xanthine dehydrogenase, molybdopterin binding domain"/>
    <property type="match status" value="4"/>
</dbReference>
<dbReference type="InterPro" id="IPR017607">
    <property type="entry name" value="4hydrxbenzoyl-CoA_Rdtase_asu"/>
</dbReference>
<dbReference type="InterPro" id="IPR000674">
    <property type="entry name" value="Ald_Oxase/Xan_DH_a/b"/>
</dbReference>
<dbReference type="InterPro" id="IPR036856">
    <property type="entry name" value="Ald_Oxase/Xan_DH_a/b_sf"/>
</dbReference>
<dbReference type="InterPro" id="IPR016208">
    <property type="entry name" value="Ald_Oxase/xanthine_DH-like"/>
</dbReference>
<dbReference type="InterPro" id="IPR008274">
    <property type="entry name" value="AldOxase/xan_DH_MoCoBD1"/>
</dbReference>
<dbReference type="InterPro" id="IPR046867">
    <property type="entry name" value="AldOxase/xan_DH_MoCoBD2"/>
</dbReference>
<dbReference type="InterPro" id="IPR037165">
    <property type="entry name" value="AldOxase/xan_DH_Mopterin-bd_sf"/>
</dbReference>
<dbReference type="NCBIfam" id="TIGR03194">
    <property type="entry name" value="4hydrxCoA_A"/>
    <property type="match status" value="1"/>
</dbReference>
<dbReference type="PANTHER" id="PTHR11908:SF132">
    <property type="entry name" value="ALDEHYDE OXIDASE 1-RELATED"/>
    <property type="match status" value="1"/>
</dbReference>
<dbReference type="PANTHER" id="PTHR11908">
    <property type="entry name" value="XANTHINE DEHYDROGENASE"/>
    <property type="match status" value="1"/>
</dbReference>
<dbReference type="Pfam" id="PF01315">
    <property type="entry name" value="Ald_Xan_dh_C"/>
    <property type="match status" value="1"/>
</dbReference>
<dbReference type="Pfam" id="PF02738">
    <property type="entry name" value="MoCoBD_1"/>
    <property type="match status" value="1"/>
</dbReference>
<dbReference type="Pfam" id="PF20256">
    <property type="entry name" value="MoCoBD_2"/>
    <property type="match status" value="1"/>
</dbReference>
<dbReference type="SMART" id="SM01008">
    <property type="entry name" value="Ald_Xan_dh_C"/>
    <property type="match status" value="1"/>
</dbReference>
<dbReference type="SUPFAM" id="SSF54665">
    <property type="entry name" value="CO dehydrogenase molybdoprotein N-domain-like"/>
    <property type="match status" value="1"/>
</dbReference>
<dbReference type="SUPFAM" id="SSF56003">
    <property type="entry name" value="Molybdenum cofactor-binding domain"/>
    <property type="match status" value="1"/>
</dbReference>
<keyword id="KW-0002">3D-structure</keyword>
<keyword id="KW-0903">Direct protein sequencing</keyword>
<keyword id="KW-0500">Molybdenum</keyword>
<keyword id="KW-0560">Oxidoreductase</keyword>
<sequence>MSPKLPQHGTVGVRTPLVDGVEKVTGKAKYTADIAAPDALVGRILRSPHAHARILAIDTSAAEALEGVIAVCTGAETPVPFGVLPIAENEYPLARDKVRYRGDPVAAVAAIDEVTAEKALALIKVDYEVLPAYMTPKAAMKAGAIALHDDKPNNILREVHAEFGDVAAAFAEADLIREKTYTFAEVNHVHMELNATLAEYDPVRDMLTLNTTTQVPYYVHLKVAACLQMDSARIRVIKPFLGGGFGARTEGLHFEIIAGLLARKAKGTVRLLQTREETFIAHRGRPWTEVKMKIGLKKDGKIAALALEATQAGGAYAGYGIITILYTGALMHGLYHIPAIKHDAWRVYTNTPPCGAMRGHGTVDTRAAFEALLTEMGEELGIDSLKIRQINMLPQIPYVTMYAQRVMSYGVPECLEKVKAASGWEERKGKLPKGRGLGIALSHFVSGTSTPKHWTGEPHATVNLKLDFDGGITLLTGAADIGQGSNTMASQVAAEVLGVRLSRIRVISADSALTPKDNGSYSSRVTFMVGNASISAAEELKGVLVKAAAKKLDAREEDIEVIDEMFMVSGSQDPGLSFQEVVKAAMVDSGTITVKGTYTCPTEFQGDKKIRGSAIGATMGFCYAAQVVEASVDEITGKVTAHKVWVAVDVGKALNPLAVEGQTQGGVWMGMGQALSEETVYDNGRMVHGNILDYRVPTIVESPDIEVIIVESMDPNGPFGAKEASEGMLAGFLPAIHEAVYEAVGVRATDFPLSPDRITELLDAKEAAA</sequence>
<feature type="chain" id="PRO_0000083925" description="4-hydroxybenzoyl-CoA reductase subunit alpha">
    <location>
        <begin position="1"/>
        <end position="769"/>
    </location>
</feature>
<feature type="binding site" evidence="2 5">
    <location>
        <position position="214"/>
    </location>
    <ligand>
        <name>Mo-molybdopterin cytosine dinucleotide</name>
        <dbReference type="ChEBI" id="CHEBI:71308"/>
    </ligand>
</feature>
<feature type="binding site" evidence="2 5">
    <location>
        <begin position="244"/>
        <end position="245"/>
    </location>
    <ligand>
        <name>Mo-molybdopterin cytosine dinucleotide</name>
        <dbReference type="ChEBI" id="CHEBI:71308"/>
    </ligand>
</feature>
<feature type="binding site" evidence="2 5">
    <location>
        <begin position="522"/>
        <end position="526"/>
    </location>
    <ligand>
        <name>Mo-molybdopterin cytosine dinucleotide</name>
        <dbReference type="ChEBI" id="CHEBI:71308"/>
    </ligand>
</feature>
<feature type="binding site" evidence="2 5">
    <location>
        <begin position="650"/>
        <end position="655"/>
    </location>
    <ligand>
        <name>Mo-molybdopterin cytosine dinucleotide</name>
        <dbReference type="ChEBI" id="CHEBI:71308"/>
    </ligand>
</feature>
<feature type="binding site" evidence="2 5">
    <location>
        <begin position="722"/>
        <end position="725"/>
    </location>
    <ligand>
        <name>Mo-molybdopterin cytosine dinucleotide</name>
        <dbReference type="ChEBI" id="CHEBI:71308"/>
    </ligand>
</feature>
<feature type="sequence conflict" description="In Ref. 1; AA sequence." evidence="4" ref="1">
    <original>Q</original>
    <variation>E</variation>
    <location>
        <position position="7"/>
    </location>
</feature>
<feature type="helix" evidence="6">
    <location>
        <begin position="20"/>
        <end position="24"/>
    </location>
</feature>
<feature type="helix" evidence="6">
    <location>
        <begin position="31"/>
        <end position="33"/>
    </location>
</feature>
<feature type="strand" evidence="6">
    <location>
        <begin position="40"/>
        <end position="46"/>
    </location>
</feature>
<feature type="strand" evidence="6">
    <location>
        <begin position="48"/>
        <end position="58"/>
    </location>
</feature>
<feature type="helix" evidence="6">
    <location>
        <begin position="60"/>
        <end position="64"/>
    </location>
</feature>
<feature type="strand" evidence="6">
    <location>
        <begin position="68"/>
        <end position="73"/>
    </location>
</feature>
<feature type="helix" evidence="6">
    <location>
        <begin position="74"/>
        <end position="76"/>
    </location>
</feature>
<feature type="strand" evidence="6">
    <location>
        <begin position="95"/>
        <end position="98"/>
    </location>
</feature>
<feature type="strand" evidence="6">
    <location>
        <begin position="104"/>
        <end position="112"/>
    </location>
</feature>
<feature type="helix" evidence="6">
    <location>
        <begin position="113"/>
        <end position="122"/>
    </location>
</feature>
<feature type="strand" evidence="6">
    <location>
        <begin position="124"/>
        <end position="129"/>
    </location>
</feature>
<feature type="helix" evidence="6">
    <location>
        <begin position="136"/>
        <end position="140"/>
    </location>
</feature>
<feature type="strand" evidence="6">
    <location>
        <begin position="154"/>
        <end position="164"/>
    </location>
</feature>
<feature type="helix" evidence="6">
    <location>
        <begin position="166"/>
        <end position="171"/>
    </location>
</feature>
<feature type="strand" evidence="6">
    <location>
        <begin position="174"/>
        <end position="183"/>
    </location>
</feature>
<feature type="strand" evidence="6">
    <location>
        <begin position="195"/>
        <end position="201"/>
    </location>
</feature>
<feature type="turn" evidence="6">
    <location>
        <begin position="202"/>
        <end position="205"/>
    </location>
</feature>
<feature type="strand" evidence="6">
    <location>
        <begin position="206"/>
        <end position="211"/>
    </location>
</feature>
<feature type="helix" evidence="6">
    <location>
        <begin position="216"/>
        <end position="227"/>
    </location>
</feature>
<feature type="helix" evidence="6">
    <location>
        <begin position="231"/>
        <end position="233"/>
    </location>
</feature>
<feature type="strand" evidence="6">
    <location>
        <begin position="234"/>
        <end position="237"/>
    </location>
</feature>
<feature type="turn" evidence="6">
    <location>
        <begin position="245"/>
        <end position="248"/>
    </location>
</feature>
<feature type="helix" evidence="6">
    <location>
        <begin position="253"/>
        <end position="265"/>
    </location>
</feature>
<feature type="strand" evidence="6">
    <location>
        <begin position="267"/>
        <end position="272"/>
    </location>
</feature>
<feature type="helix" evidence="6">
    <location>
        <begin position="275"/>
        <end position="281"/>
    </location>
</feature>
<feature type="strand" evidence="6">
    <location>
        <begin position="287"/>
        <end position="296"/>
    </location>
</feature>
<feature type="strand" evidence="6">
    <location>
        <begin position="302"/>
        <end position="312"/>
    </location>
</feature>
<feature type="helix" evidence="6">
    <location>
        <begin position="320"/>
        <end position="329"/>
    </location>
</feature>
<feature type="strand" evidence="6">
    <location>
        <begin position="332"/>
        <end position="335"/>
    </location>
</feature>
<feature type="strand" evidence="6">
    <location>
        <begin position="340"/>
        <end position="347"/>
    </location>
</feature>
<feature type="strand" evidence="6">
    <location>
        <begin position="350"/>
        <end position="352"/>
    </location>
</feature>
<feature type="turn" evidence="6">
    <location>
        <begin position="360"/>
        <end position="362"/>
    </location>
</feature>
<feature type="helix" evidence="6">
    <location>
        <begin position="363"/>
        <end position="380"/>
    </location>
</feature>
<feature type="helix" evidence="6">
    <location>
        <begin position="384"/>
        <end position="390"/>
    </location>
</feature>
<feature type="strand" evidence="6">
    <location>
        <begin position="394"/>
        <end position="399"/>
    </location>
</feature>
<feature type="helix" evidence="6">
    <location>
        <begin position="411"/>
        <end position="422"/>
    </location>
</feature>
<feature type="helix" evidence="6">
    <location>
        <begin position="424"/>
        <end position="427"/>
    </location>
</feature>
<feature type="strand" evidence="6">
    <location>
        <begin position="435"/>
        <end position="447"/>
    </location>
</feature>
<feature type="strand" evidence="6">
    <location>
        <begin position="459"/>
        <end position="466"/>
    </location>
</feature>
<feature type="strand" evidence="6">
    <location>
        <begin position="472"/>
        <end position="476"/>
    </location>
</feature>
<feature type="strand" evidence="6">
    <location>
        <begin position="481"/>
        <end position="483"/>
    </location>
</feature>
<feature type="helix" evidence="6">
    <location>
        <begin position="485"/>
        <end position="497"/>
    </location>
</feature>
<feature type="helix" evidence="6">
    <location>
        <begin position="501"/>
        <end position="503"/>
    </location>
</feature>
<feature type="strand" evidence="6">
    <location>
        <begin position="504"/>
        <end position="510"/>
    </location>
</feature>
<feature type="turn" evidence="6">
    <location>
        <begin position="511"/>
        <end position="513"/>
    </location>
</feature>
<feature type="helix" evidence="6">
    <location>
        <begin position="525"/>
        <end position="551"/>
    </location>
</feature>
<feature type="helix" evidence="6">
    <location>
        <begin position="556"/>
        <end position="558"/>
    </location>
</feature>
<feature type="strand" evidence="6">
    <location>
        <begin position="559"/>
        <end position="562"/>
    </location>
</feature>
<feature type="strand" evidence="6">
    <location>
        <begin position="565"/>
        <end position="568"/>
    </location>
</feature>
<feature type="helix" evidence="6">
    <location>
        <begin position="578"/>
        <end position="586"/>
    </location>
</feature>
<feature type="turn" evidence="6">
    <location>
        <begin position="587"/>
        <end position="589"/>
    </location>
</feature>
<feature type="strand" evidence="6">
    <location>
        <begin position="591"/>
        <end position="598"/>
    </location>
</feature>
<feature type="helix" evidence="6">
    <location>
        <begin position="602"/>
        <end position="604"/>
    </location>
</feature>
<feature type="helix" evidence="6">
    <location>
        <begin position="611"/>
        <end position="614"/>
    </location>
</feature>
<feature type="strand" evidence="6">
    <location>
        <begin position="621"/>
        <end position="632"/>
    </location>
</feature>
<feature type="turn" evidence="6">
    <location>
        <begin position="634"/>
        <end position="636"/>
    </location>
</feature>
<feature type="strand" evidence="6">
    <location>
        <begin position="639"/>
        <end position="649"/>
    </location>
</feature>
<feature type="helix" evidence="6">
    <location>
        <begin position="656"/>
        <end position="675"/>
    </location>
</feature>
<feature type="strand" evidence="6">
    <location>
        <begin position="685"/>
        <end position="687"/>
    </location>
</feature>
<feature type="turn" evidence="6">
    <location>
        <begin position="691"/>
        <end position="693"/>
    </location>
</feature>
<feature type="turn" evidence="6">
    <location>
        <begin position="699"/>
        <end position="701"/>
    </location>
</feature>
<feature type="strand" evidence="6">
    <location>
        <begin position="704"/>
        <end position="710"/>
    </location>
</feature>
<feature type="helix" evidence="6">
    <location>
        <begin position="718"/>
        <end position="720"/>
    </location>
</feature>
<feature type="helix" evidence="6">
    <location>
        <begin position="732"/>
        <end position="744"/>
    </location>
</feature>
<feature type="strand" evidence="6">
    <location>
        <begin position="750"/>
        <end position="752"/>
    </location>
</feature>
<feature type="helix" evidence="6">
    <location>
        <begin position="755"/>
        <end position="767"/>
    </location>
</feature>
<accession>O33819</accession>
<gene>
    <name type="primary">hcrA</name>
</gene>
<evidence type="ECO:0000269" key="1">
    <source>
    </source>
</evidence>
<evidence type="ECO:0000269" key="2">
    <source>
    </source>
</evidence>
<evidence type="ECO:0000269" key="3">
    <source>
    </source>
</evidence>
<evidence type="ECO:0000305" key="4"/>
<evidence type="ECO:0007744" key="5">
    <source>
        <dbReference type="PDB" id="1RM6"/>
    </source>
</evidence>
<evidence type="ECO:0007829" key="6">
    <source>
        <dbReference type="PDB" id="1RM6"/>
    </source>
</evidence>